<sequence length="332" mass="35224">MSRDRGARGLRKYGRFALATGAATALSLTASGCVVVHGEREVLPAAKKSEATRALAGFLTAYNKAQKANDRSLDAGRVTGALADIDGAKLEAGHKTAPAGNTDYTPLKLTDAKFAIPAKAGWPRWFVADTASNRDKNRWVLVFTRGSANDVWQVSYLTALAPADVPRFKKDKDGWAEPVTADDAALAVRPQKLGAAYATYLKSGGDTFADGRFTSGLRAGRKKNASKPGLARQYMDEPLNSGDHAPLGLRTTDGGALVFFVTHHYEKQTAAQGVNITVNDPNIKALMTGDPKQSLTMEFVSNQAVLDPAKGSGDQRVTFLSKVAGLTAAKGE</sequence>
<feature type="signal peptide" evidence="1">
    <location>
        <begin position="1"/>
        <end position="32"/>
    </location>
</feature>
<feature type="chain" id="PRO_0000253346" description="Uncharacterized lipoprotein SAV_5923">
    <location>
        <begin position="33"/>
        <end position="332"/>
    </location>
</feature>
<feature type="lipid moiety-binding region" description="N-palmitoyl cysteine" evidence="1">
    <location>
        <position position="33"/>
    </location>
</feature>
<feature type="lipid moiety-binding region" description="S-diacylglycerol cysteine" evidence="1">
    <location>
        <position position="33"/>
    </location>
</feature>
<protein>
    <recommendedName>
        <fullName>Uncharacterized lipoprotein SAV_5923</fullName>
    </recommendedName>
</protein>
<comment type="subcellular location">
    <subcellularLocation>
        <location evidence="1">Cell membrane</location>
        <topology evidence="1">Lipid-anchor</topology>
    </subcellularLocation>
</comment>
<comment type="sequence caution" evidence="2">
    <conflict type="erroneous initiation">
        <sequence resource="EMBL-CDS" id="BAC73635"/>
    </conflict>
</comment>
<name>Y5923_STRAW</name>
<keyword id="KW-1003">Cell membrane</keyword>
<keyword id="KW-0449">Lipoprotein</keyword>
<keyword id="KW-0472">Membrane</keyword>
<keyword id="KW-0564">Palmitate</keyword>
<keyword id="KW-1185">Reference proteome</keyword>
<keyword id="KW-0732">Signal</keyword>
<proteinExistence type="inferred from homology"/>
<organism>
    <name type="scientific">Streptomyces avermitilis (strain ATCC 31267 / DSM 46492 / JCM 5070 / NBRC 14893 / NCIMB 12804 / NRRL 8165 / MA-4680)</name>
    <dbReference type="NCBI Taxonomy" id="227882"/>
    <lineage>
        <taxon>Bacteria</taxon>
        <taxon>Bacillati</taxon>
        <taxon>Actinomycetota</taxon>
        <taxon>Actinomycetes</taxon>
        <taxon>Kitasatosporales</taxon>
        <taxon>Streptomycetaceae</taxon>
        <taxon>Streptomyces</taxon>
    </lineage>
</organism>
<gene>
    <name type="ordered locus">SAV_5923</name>
</gene>
<dbReference type="EMBL" id="BA000030">
    <property type="protein sequence ID" value="BAC73635.1"/>
    <property type="status" value="ALT_INIT"/>
    <property type="molecule type" value="Genomic_DNA"/>
</dbReference>
<dbReference type="RefSeq" id="WP_037645811.1">
    <property type="nucleotide sequence ID" value="NZ_JZJK01000089.1"/>
</dbReference>
<dbReference type="GeneID" id="41543004"/>
<dbReference type="KEGG" id="sma:SAVERM_5923"/>
<dbReference type="eggNOG" id="ENOG502ZCCY">
    <property type="taxonomic scope" value="Bacteria"/>
</dbReference>
<dbReference type="HOGENOM" id="CLU_067337_0_0_11"/>
<dbReference type="OrthoDB" id="3510378at2"/>
<dbReference type="Proteomes" id="UP000000428">
    <property type="component" value="Chromosome"/>
</dbReference>
<dbReference type="GO" id="GO:0005886">
    <property type="term" value="C:plasma membrane"/>
    <property type="evidence" value="ECO:0007669"/>
    <property type="project" value="UniProtKB-SubCell"/>
</dbReference>
<dbReference type="PROSITE" id="PS51257">
    <property type="entry name" value="PROKAR_LIPOPROTEIN"/>
    <property type="match status" value="1"/>
</dbReference>
<reference key="1">
    <citation type="journal article" date="2001" name="Proc. Natl. Acad. Sci. U.S.A.">
        <title>Genome sequence of an industrial microorganism Streptomyces avermitilis: deducing the ability of producing secondary metabolites.</title>
        <authorList>
            <person name="Omura S."/>
            <person name="Ikeda H."/>
            <person name="Ishikawa J."/>
            <person name="Hanamoto A."/>
            <person name="Takahashi C."/>
            <person name="Shinose M."/>
            <person name="Takahashi Y."/>
            <person name="Horikawa H."/>
            <person name="Nakazawa H."/>
            <person name="Osonoe T."/>
            <person name="Kikuchi H."/>
            <person name="Shiba T."/>
            <person name="Sakaki Y."/>
            <person name="Hattori M."/>
        </authorList>
    </citation>
    <scope>NUCLEOTIDE SEQUENCE [LARGE SCALE GENOMIC DNA]</scope>
    <source>
        <strain>ATCC 31267 / DSM 46492 / JCM 5070 / NBRC 14893 / NCIMB 12804 / NRRL 8165 / MA-4680</strain>
    </source>
</reference>
<reference key="2">
    <citation type="journal article" date="2003" name="Nat. Biotechnol.">
        <title>Complete genome sequence and comparative analysis of the industrial microorganism Streptomyces avermitilis.</title>
        <authorList>
            <person name="Ikeda H."/>
            <person name="Ishikawa J."/>
            <person name="Hanamoto A."/>
            <person name="Shinose M."/>
            <person name="Kikuchi H."/>
            <person name="Shiba T."/>
            <person name="Sakaki Y."/>
            <person name="Hattori M."/>
            <person name="Omura S."/>
        </authorList>
    </citation>
    <scope>NUCLEOTIDE SEQUENCE [LARGE SCALE GENOMIC DNA]</scope>
    <source>
        <strain>ATCC 31267 / DSM 46492 / JCM 5070 / NBRC 14893 / NCIMB 12804 / NRRL 8165 / MA-4680</strain>
    </source>
</reference>
<accession>Q82AY2</accession>
<evidence type="ECO:0000255" key="1">
    <source>
        <dbReference type="PROSITE-ProRule" id="PRU00303"/>
    </source>
</evidence>
<evidence type="ECO:0000305" key="2"/>